<sequence length="149" mass="16820">MADQLTDDQISEFKEAFSLFDKDGDGCITTKELGTVMRSLGQNPTEAELQDMINEVDADGNGTIDFPEFLNLMARKMKDTDSEEELKEAFRVFDKDQNGFISAAELRHVMTNLGEKLTDEEVDEMIKEADVDGDGQINYEEFVKVMMAK</sequence>
<dbReference type="EMBL" id="M73711">
    <property type="protein sequence ID" value="AAA32764.1"/>
    <property type="molecule type" value="Genomic_DNA"/>
</dbReference>
<dbReference type="EMBL" id="M73712">
    <property type="protein sequence ID" value="AAA32765.1"/>
    <property type="molecule type" value="mRNA"/>
</dbReference>
<dbReference type="EMBL" id="AL390921">
    <property type="protein sequence ID" value="CAC00743.1"/>
    <property type="molecule type" value="Genomic_DNA"/>
</dbReference>
<dbReference type="EMBL" id="CP002686">
    <property type="protein sequence ID" value="AEE79567.1"/>
    <property type="molecule type" value="Genomic_DNA"/>
</dbReference>
<dbReference type="EMBL" id="AY046048">
    <property type="protein sequence ID" value="AAK76722.1"/>
    <property type="molecule type" value="mRNA"/>
</dbReference>
<dbReference type="EMBL" id="AY057567">
    <property type="protein sequence ID" value="AAL09806.1"/>
    <property type="molecule type" value="mRNA"/>
</dbReference>
<dbReference type="EMBL" id="AY091301">
    <property type="protein sequence ID" value="AAM14240.1"/>
    <property type="molecule type" value="mRNA"/>
</dbReference>
<dbReference type="EMBL" id="AY085660">
    <property type="protein sequence ID" value="AAM62881.1"/>
    <property type="molecule type" value="mRNA"/>
</dbReference>
<dbReference type="PIR" id="S22503">
    <property type="entry name" value="S22503"/>
</dbReference>
<dbReference type="RefSeq" id="NP_191239.1">
    <property type="nucleotide sequence ID" value="NM_115539.5"/>
</dbReference>
<dbReference type="SMR" id="P0DH98"/>
<dbReference type="BioGRID" id="10163">
    <property type="interactions" value="5"/>
</dbReference>
<dbReference type="BioGRID" id="2597">
    <property type="interactions" value="11"/>
</dbReference>
<dbReference type="BioGRID" id="4047">
    <property type="interactions" value="3"/>
</dbReference>
<dbReference type="FunCoup" id="P0DH98">
    <property type="interactions" value="2638"/>
</dbReference>
<dbReference type="STRING" id="3702.P0DH98"/>
<dbReference type="ProMEX" id="P0DH98"/>
<dbReference type="EnsemblPlants" id="AT2G27030.1">
    <property type="protein sequence ID" value="AT2G27030.1"/>
    <property type="gene ID" value="AT2G27030"/>
</dbReference>
<dbReference type="EnsemblPlants" id="AT2G41110.1">
    <property type="protein sequence ID" value="AT2G41110.1"/>
    <property type="gene ID" value="AT2G41110"/>
</dbReference>
<dbReference type="EnsemblPlants" id="AT3G56800.1">
    <property type="protein sequence ID" value="AT3G56800.1"/>
    <property type="gene ID" value="AT3G56800"/>
</dbReference>
<dbReference type="GeneID" id="824847"/>
<dbReference type="Gramene" id="AT2G27030.1">
    <property type="protein sequence ID" value="AT2G27030.1"/>
    <property type="gene ID" value="AT2G27030"/>
</dbReference>
<dbReference type="Gramene" id="AT2G41110.1">
    <property type="protein sequence ID" value="AT2G41110.1"/>
    <property type="gene ID" value="AT2G41110"/>
</dbReference>
<dbReference type="Gramene" id="AT3G56800.1">
    <property type="protein sequence ID" value="AT3G56800.1"/>
    <property type="gene ID" value="AT3G56800"/>
</dbReference>
<dbReference type="KEGG" id="ath:AT2G27030"/>
<dbReference type="KEGG" id="ath:AT2G41110"/>
<dbReference type="KEGG" id="ath:AT3G56800"/>
<dbReference type="Araport" id="AT3G56800"/>
<dbReference type="TAIR" id="AT3G56800">
    <property type="gene designation" value="CAM3"/>
</dbReference>
<dbReference type="HOGENOM" id="CLU_061288_2_0_1"/>
<dbReference type="InParanoid" id="P0DH98"/>
<dbReference type="OMA" id="RIDCESI"/>
<dbReference type="OrthoDB" id="1042764at2759"/>
<dbReference type="PhylomeDB" id="P0DH98"/>
<dbReference type="PRO" id="PR:P0DH98"/>
<dbReference type="Proteomes" id="UP000006548">
    <property type="component" value="Chromosome 3"/>
</dbReference>
<dbReference type="ExpressionAtlas" id="P0DH98">
    <property type="expression patterns" value="baseline and differential"/>
</dbReference>
<dbReference type="GO" id="GO:0005737">
    <property type="term" value="C:cytoplasm"/>
    <property type="evidence" value="ECO:0000314"/>
    <property type="project" value="TAIR"/>
</dbReference>
<dbReference type="GO" id="GO:0005829">
    <property type="term" value="C:cytosol"/>
    <property type="evidence" value="ECO:0007005"/>
    <property type="project" value="TAIR"/>
</dbReference>
<dbReference type="GO" id="GO:0000325">
    <property type="term" value="C:plant-type vacuole"/>
    <property type="evidence" value="ECO:0007005"/>
    <property type="project" value="TAIR"/>
</dbReference>
<dbReference type="GO" id="GO:0005509">
    <property type="term" value="F:calcium ion binding"/>
    <property type="evidence" value="ECO:0007669"/>
    <property type="project" value="InterPro"/>
</dbReference>
<dbReference type="GO" id="GO:0019722">
    <property type="term" value="P:calcium-mediated signaling"/>
    <property type="evidence" value="ECO:0000304"/>
    <property type="project" value="TAIR"/>
</dbReference>
<dbReference type="CDD" id="cd00051">
    <property type="entry name" value="EFh"/>
    <property type="match status" value="2"/>
</dbReference>
<dbReference type="FunFam" id="1.10.238.10:FF:000034">
    <property type="entry name" value="Calmodulin"/>
    <property type="match status" value="1"/>
</dbReference>
<dbReference type="FunFam" id="1.10.238.10:FF:000042">
    <property type="entry name" value="Calmodulin"/>
    <property type="match status" value="1"/>
</dbReference>
<dbReference type="Gene3D" id="1.10.238.10">
    <property type="entry name" value="EF-hand"/>
    <property type="match status" value="3"/>
</dbReference>
<dbReference type="InterPro" id="IPR050230">
    <property type="entry name" value="CALM/Myosin/TropC-like"/>
</dbReference>
<dbReference type="InterPro" id="IPR011992">
    <property type="entry name" value="EF-hand-dom_pair"/>
</dbReference>
<dbReference type="InterPro" id="IPR018247">
    <property type="entry name" value="EF_Hand_1_Ca_BS"/>
</dbReference>
<dbReference type="InterPro" id="IPR002048">
    <property type="entry name" value="EF_hand_dom"/>
</dbReference>
<dbReference type="PANTHER" id="PTHR23048:SF53">
    <property type="entry name" value="CALMODULIN"/>
    <property type="match status" value="1"/>
</dbReference>
<dbReference type="PANTHER" id="PTHR23048">
    <property type="entry name" value="MYOSIN LIGHT CHAIN 1, 3"/>
    <property type="match status" value="1"/>
</dbReference>
<dbReference type="Pfam" id="PF13499">
    <property type="entry name" value="EF-hand_7"/>
    <property type="match status" value="2"/>
</dbReference>
<dbReference type="SMART" id="SM00054">
    <property type="entry name" value="EFh"/>
    <property type="match status" value="4"/>
</dbReference>
<dbReference type="SUPFAM" id="SSF47473">
    <property type="entry name" value="EF-hand"/>
    <property type="match status" value="1"/>
</dbReference>
<dbReference type="PROSITE" id="PS00018">
    <property type="entry name" value="EF_HAND_1"/>
    <property type="match status" value="4"/>
</dbReference>
<dbReference type="PROSITE" id="PS50222">
    <property type="entry name" value="EF_HAND_2"/>
    <property type="match status" value="4"/>
</dbReference>
<protein>
    <recommendedName>
        <fullName evidence="4">Calmodulin-3</fullName>
        <shortName evidence="4">CaM-3</shortName>
    </recommendedName>
</protein>
<comment type="function">
    <text evidence="2">Calmodulin mediates the control of a large number of enzymes, ion channels and other proteins by Ca(2+). Among the enzymes to be stimulated by the calmodulin-Ca(2+) complex are a number of protein kinases and phosphatases. Activates MPK8 in vitro.</text>
</comment>
<comment type="subunit">
    <text evidence="2 3">Interacts with MPK8 (PubMed:21419340). Binds to ABCG36 (PubMed:26315018).</text>
</comment>
<comment type="miscellaneous">
    <text>This protein has four functional calcium-binding sites.</text>
</comment>
<comment type="similarity">
    <text evidence="5">Belongs to the calmodulin family.</text>
</comment>
<keyword id="KW-0106">Calcium</keyword>
<keyword id="KW-0479">Metal-binding</keyword>
<keyword id="KW-1185">Reference proteome</keyword>
<keyword id="KW-0677">Repeat</keyword>
<evidence type="ECO:0000255" key="1">
    <source>
        <dbReference type="PROSITE-ProRule" id="PRU00448"/>
    </source>
</evidence>
<evidence type="ECO:0000269" key="2">
    <source>
    </source>
</evidence>
<evidence type="ECO:0000269" key="3">
    <source>
    </source>
</evidence>
<evidence type="ECO:0000303" key="4">
    <source>
    </source>
</evidence>
<evidence type="ECO:0000305" key="5"/>
<evidence type="ECO:0000312" key="6">
    <source>
        <dbReference type="Araport" id="AT3G56800"/>
    </source>
</evidence>
<evidence type="ECO:0000312" key="7">
    <source>
        <dbReference type="EMBL" id="CAC00743.1"/>
    </source>
</evidence>
<name>CALM3_ARATH</name>
<proteinExistence type="evidence at protein level"/>
<feature type="chain" id="PRO_0000415791" description="Calmodulin-3">
    <location>
        <begin position="1"/>
        <end position="149"/>
    </location>
</feature>
<feature type="domain" description="EF-hand 1" evidence="1">
    <location>
        <begin position="8"/>
        <end position="43"/>
    </location>
</feature>
<feature type="domain" description="EF-hand 2" evidence="1">
    <location>
        <begin position="44"/>
        <end position="79"/>
    </location>
</feature>
<feature type="domain" description="EF-hand 3" evidence="1">
    <location>
        <begin position="81"/>
        <end position="116"/>
    </location>
</feature>
<feature type="domain" description="EF-hand 4" evidence="1">
    <location>
        <begin position="117"/>
        <end position="149"/>
    </location>
</feature>
<feature type="binding site" evidence="1">
    <location>
        <position position="21"/>
    </location>
    <ligand>
        <name>Ca(2+)</name>
        <dbReference type="ChEBI" id="CHEBI:29108"/>
        <label>1</label>
    </ligand>
</feature>
<feature type="binding site" evidence="1">
    <location>
        <position position="23"/>
    </location>
    <ligand>
        <name>Ca(2+)</name>
        <dbReference type="ChEBI" id="CHEBI:29108"/>
        <label>1</label>
    </ligand>
</feature>
<feature type="binding site" evidence="1">
    <location>
        <position position="25"/>
    </location>
    <ligand>
        <name>Ca(2+)</name>
        <dbReference type="ChEBI" id="CHEBI:29108"/>
        <label>1</label>
    </ligand>
</feature>
<feature type="binding site" evidence="1">
    <location>
        <position position="27"/>
    </location>
    <ligand>
        <name>Ca(2+)</name>
        <dbReference type="ChEBI" id="CHEBI:29108"/>
        <label>1</label>
    </ligand>
</feature>
<feature type="binding site" evidence="1">
    <location>
        <position position="32"/>
    </location>
    <ligand>
        <name>Ca(2+)</name>
        <dbReference type="ChEBI" id="CHEBI:29108"/>
        <label>1</label>
    </ligand>
</feature>
<feature type="binding site" evidence="1">
    <location>
        <position position="57"/>
    </location>
    <ligand>
        <name>Ca(2+)</name>
        <dbReference type="ChEBI" id="CHEBI:29108"/>
        <label>2</label>
    </ligand>
</feature>
<feature type="binding site" evidence="1">
    <location>
        <position position="59"/>
    </location>
    <ligand>
        <name>Ca(2+)</name>
        <dbReference type="ChEBI" id="CHEBI:29108"/>
        <label>2</label>
    </ligand>
</feature>
<feature type="binding site" evidence="1">
    <location>
        <position position="61"/>
    </location>
    <ligand>
        <name>Ca(2+)</name>
        <dbReference type="ChEBI" id="CHEBI:29108"/>
        <label>2</label>
    </ligand>
</feature>
<feature type="binding site" evidence="1">
    <location>
        <position position="63"/>
    </location>
    <ligand>
        <name>Ca(2+)</name>
        <dbReference type="ChEBI" id="CHEBI:29108"/>
        <label>2</label>
    </ligand>
</feature>
<feature type="binding site" evidence="1">
    <location>
        <position position="68"/>
    </location>
    <ligand>
        <name>Ca(2+)</name>
        <dbReference type="ChEBI" id="CHEBI:29108"/>
        <label>2</label>
    </ligand>
</feature>
<feature type="binding site" evidence="1">
    <location>
        <position position="94"/>
    </location>
    <ligand>
        <name>Ca(2+)</name>
        <dbReference type="ChEBI" id="CHEBI:29108"/>
        <label>3</label>
    </ligand>
</feature>
<feature type="binding site" evidence="1">
    <location>
        <position position="96"/>
    </location>
    <ligand>
        <name>Ca(2+)</name>
        <dbReference type="ChEBI" id="CHEBI:29108"/>
        <label>3</label>
    </ligand>
</feature>
<feature type="binding site" evidence="1">
    <location>
        <position position="98"/>
    </location>
    <ligand>
        <name>Ca(2+)</name>
        <dbReference type="ChEBI" id="CHEBI:29108"/>
        <label>3</label>
    </ligand>
</feature>
<feature type="binding site" evidence="1">
    <location>
        <position position="105"/>
    </location>
    <ligand>
        <name>Ca(2+)</name>
        <dbReference type="ChEBI" id="CHEBI:29108"/>
        <label>3</label>
    </ligand>
</feature>
<feature type="binding site" evidence="1">
    <location>
        <position position="130"/>
    </location>
    <ligand>
        <name>Ca(2+)</name>
        <dbReference type="ChEBI" id="CHEBI:29108"/>
        <label>4</label>
    </ligand>
</feature>
<feature type="binding site" evidence="1">
    <location>
        <position position="132"/>
    </location>
    <ligand>
        <name>Ca(2+)</name>
        <dbReference type="ChEBI" id="CHEBI:29108"/>
        <label>4</label>
    </ligand>
</feature>
<feature type="binding site" evidence="1">
    <location>
        <position position="134"/>
    </location>
    <ligand>
        <name>Ca(2+)</name>
        <dbReference type="ChEBI" id="CHEBI:29108"/>
        <label>4</label>
    </ligand>
</feature>
<feature type="binding site" evidence="1">
    <location>
        <position position="136"/>
    </location>
    <ligand>
        <name>Ca(2+)</name>
        <dbReference type="ChEBI" id="CHEBI:29108"/>
        <label>4</label>
    </ligand>
</feature>
<feature type="binding site" evidence="1">
    <location>
        <position position="141"/>
    </location>
    <ligand>
        <name>Ca(2+)</name>
        <dbReference type="ChEBI" id="CHEBI:29108"/>
        <label>4</label>
    </ligand>
</feature>
<organism>
    <name type="scientific">Arabidopsis thaliana</name>
    <name type="common">Mouse-ear cress</name>
    <dbReference type="NCBI Taxonomy" id="3702"/>
    <lineage>
        <taxon>Eukaryota</taxon>
        <taxon>Viridiplantae</taxon>
        <taxon>Streptophyta</taxon>
        <taxon>Embryophyta</taxon>
        <taxon>Tracheophyta</taxon>
        <taxon>Spermatophyta</taxon>
        <taxon>Magnoliopsida</taxon>
        <taxon>eudicotyledons</taxon>
        <taxon>Gunneridae</taxon>
        <taxon>Pentapetalae</taxon>
        <taxon>rosids</taxon>
        <taxon>malvids</taxon>
        <taxon>Brassicales</taxon>
        <taxon>Brassicaceae</taxon>
        <taxon>Camelineae</taxon>
        <taxon>Arabidopsis</taxon>
    </lineage>
</organism>
<reference key="1">
    <citation type="journal article" date="1992" name="Plant Mol. Biol.">
        <title>Structure and expression of the Arabidopsis CaM-3 calmodulin gene.</title>
        <authorList>
            <person name="Perera I.Y."/>
            <person name="Zielinski R.E."/>
        </authorList>
    </citation>
    <scope>NUCLEOTIDE SEQUENCE [GENOMIC DNA / MRNA]</scope>
</reference>
<reference key="2">
    <citation type="journal article" date="2000" name="Nature">
        <title>Sequence and analysis of chromosome 3 of the plant Arabidopsis thaliana.</title>
        <authorList>
            <person name="Salanoubat M."/>
            <person name="Lemcke K."/>
            <person name="Rieger M."/>
            <person name="Ansorge W."/>
            <person name="Unseld M."/>
            <person name="Fartmann B."/>
            <person name="Valle G."/>
            <person name="Bloecker H."/>
            <person name="Perez-Alonso M."/>
            <person name="Obermaier B."/>
            <person name="Delseny M."/>
            <person name="Boutry M."/>
            <person name="Grivell L.A."/>
            <person name="Mache R."/>
            <person name="Puigdomenech P."/>
            <person name="De Simone V."/>
            <person name="Choisne N."/>
            <person name="Artiguenave F."/>
            <person name="Robert C."/>
            <person name="Brottier P."/>
            <person name="Wincker P."/>
            <person name="Cattolico L."/>
            <person name="Weissenbach J."/>
            <person name="Saurin W."/>
            <person name="Quetier F."/>
            <person name="Schaefer M."/>
            <person name="Mueller-Auer S."/>
            <person name="Gabel C."/>
            <person name="Fuchs M."/>
            <person name="Benes V."/>
            <person name="Wurmbach E."/>
            <person name="Drzonek H."/>
            <person name="Erfle H."/>
            <person name="Jordan N."/>
            <person name="Bangert S."/>
            <person name="Wiedelmann R."/>
            <person name="Kranz H."/>
            <person name="Voss H."/>
            <person name="Holland R."/>
            <person name="Brandt P."/>
            <person name="Nyakatura G."/>
            <person name="Vezzi A."/>
            <person name="D'Angelo M."/>
            <person name="Pallavicini A."/>
            <person name="Toppo S."/>
            <person name="Simionati B."/>
            <person name="Conrad A."/>
            <person name="Hornischer K."/>
            <person name="Kauer G."/>
            <person name="Loehnert T.-H."/>
            <person name="Nordsiek G."/>
            <person name="Reichelt J."/>
            <person name="Scharfe M."/>
            <person name="Schoen O."/>
            <person name="Bargues M."/>
            <person name="Terol J."/>
            <person name="Climent J."/>
            <person name="Navarro P."/>
            <person name="Collado C."/>
            <person name="Perez-Perez A."/>
            <person name="Ottenwaelder B."/>
            <person name="Duchemin D."/>
            <person name="Cooke R."/>
            <person name="Laudie M."/>
            <person name="Berger-Llauro C."/>
            <person name="Purnelle B."/>
            <person name="Masuy D."/>
            <person name="de Haan M."/>
            <person name="Maarse A.C."/>
            <person name="Alcaraz J.-P."/>
            <person name="Cottet A."/>
            <person name="Casacuberta E."/>
            <person name="Monfort A."/>
            <person name="Argiriou A."/>
            <person name="Flores M."/>
            <person name="Liguori R."/>
            <person name="Vitale D."/>
            <person name="Mannhaupt G."/>
            <person name="Haase D."/>
            <person name="Schoof H."/>
            <person name="Rudd S."/>
            <person name="Zaccaria P."/>
            <person name="Mewes H.-W."/>
            <person name="Mayer K.F.X."/>
            <person name="Kaul S."/>
            <person name="Town C.D."/>
            <person name="Koo H.L."/>
            <person name="Tallon L.J."/>
            <person name="Jenkins J."/>
            <person name="Rooney T."/>
            <person name="Rizzo M."/>
            <person name="Walts A."/>
            <person name="Utterback T."/>
            <person name="Fujii C.Y."/>
            <person name="Shea T.P."/>
            <person name="Creasy T.H."/>
            <person name="Haas B."/>
            <person name="Maiti R."/>
            <person name="Wu D."/>
            <person name="Peterson J."/>
            <person name="Van Aken S."/>
            <person name="Pai G."/>
            <person name="Militscher J."/>
            <person name="Sellers P."/>
            <person name="Gill J.E."/>
            <person name="Feldblyum T.V."/>
            <person name="Preuss D."/>
            <person name="Lin X."/>
            <person name="Nierman W.C."/>
            <person name="Salzberg S.L."/>
            <person name="White O."/>
            <person name="Venter J.C."/>
            <person name="Fraser C.M."/>
            <person name="Kaneko T."/>
            <person name="Nakamura Y."/>
            <person name="Sato S."/>
            <person name="Kato T."/>
            <person name="Asamizu E."/>
            <person name="Sasamoto S."/>
            <person name="Kimura T."/>
            <person name="Idesawa K."/>
            <person name="Kawashima K."/>
            <person name="Kishida Y."/>
            <person name="Kiyokawa C."/>
            <person name="Kohara M."/>
            <person name="Matsumoto M."/>
            <person name="Matsuno A."/>
            <person name="Muraki A."/>
            <person name="Nakayama S."/>
            <person name="Nakazaki N."/>
            <person name="Shinpo S."/>
            <person name="Takeuchi C."/>
            <person name="Wada T."/>
            <person name="Watanabe A."/>
            <person name="Yamada M."/>
            <person name="Yasuda M."/>
            <person name="Tabata S."/>
        </authorList>
    </citation>
    <scope>NUCLEOTIDE SEQUENCE [LARGE SCALE GENOMIC DNA]</scope>
    <source>
        <strain>cv. Columbia</strain>
    </source>
</reference>
<reference key="3">
    <citation type="journal article" date="2017" name="Plant J.">
        <title>Araport11: a complete reannotation of the Arabidopsis thaliana reference genome.</title>
        <authorList>
            <person name="Cheng C.Y."/>
            <person name="Krishnakumar V."/>
            <person name="Chan A.P."/>
            <person name="Thibaud-Nissen F."/>
            <person name="Schobel S."/>
            <person name="Town C.D."/>
        </authorList>
    </citation>
    <scope>GENOME REANNOTATION</scope>
    <source>
        <strain>cv. Columbia</strain>
    </source>
</reference>
<reference key="4">
    <citation type="journal article" date="2003" name="Science">
        <title>Empirical analysis of transcriptional activity in the Arabidopsis genome.</title>
        <authorList>
            <person name="Yamada K."/>
            <person name="Lim J."/>
            <person name="Dale J.M."/>
            <person name="Chen H."/>
            <person name="Shinn P."/>
            <person name="Palm C.J."/>
            <person name="Southwick A.M."/>
            <person name="Wu H.C."/>
            <person name="Kim C.J."/>
            <person name="Nguyen M."/>
            <person name="Pham P.K."/>
            <person name="Cheuk R.F."/>
            <person name="Karlin-Newmann G."/>
            <person name="Liu S.X."/>
            <person name="Lam B."/>
            <person name="Sakano H."/>
            <person name="Wu T."/>
            <person name="Yu G."/>
            <person name="Miranda M."/>
            <person name="Quach H.L."/>
            <person name="Tripp M."/>
            <person name="Chang C.H."/>
            <person name="Lee J.M."/>
            <person name="Toriumi M.J."/>
            <person name="Chan M.M."/>
            <person name="Tang C.C."/>
            <person name="Onodera C.S."/>
            <person name="Deng J.M."/>
            <person name="Akiyama K."/>
            <person name="Ansari Y."/>
            <person name="Arakawa T."/>
            <person name="Banh J."/>
            <person name="Banno F."/>
            <person name="Bowser L."/>
            <person name="Brooks S.Y."/>
            <person name="Carninci P."/>
            <person name="Chao Q."/>
            <person name="Choy N."/>
            <person name="Enju A."/>
            <person name="Goldsmith A.D."/>
            <person name="Gurjal M."/>
            <person name="Hansen N.F."/>
            <person name="Hayashizaki Y."/>
            <person name="Johnson-Hopson C."/>
            <person name="Hsuan V.W."/>
            <person name="Iida K."/>
            <person name="Karnes M."/>
            <person name="Khan S."/>
            <person name="Koesema E."/>
            <person name="Ishida J."/>
            <person name="Jiang P.X."/>
            <person name="Jones T."/>
            <person name="Kawai J."/>
            <person name="Kamiya A."/>
            <person name="Meyers C."/>
            <person name="Nakajima M."/>
            <person name="Narusaka M."/>
            <person name="Seki M."/>
            <person name="Sakurai T."/>
            <person name="Satou M."/>
            <person name="Tamse R."/>
            <person name="Vaysberg M."/>
            <person name="Wallender E.K."/>
            <person name="Wong C."/>
            <person name="Yamamura Y."/>
            <person name="Yuan S."/>
            <person name="Shinozaki K."/>
            <person name="Davis R.W."/>
            <person name="Theologis A."/>
            <person name="Ecker J.R."/>
        </authorList>
    </citation>
    <scope>NUCLEOTIDE SEQUENCE [LARGE SCALE MRNA]</scope>
    <source>
        <strain>cv. Columbia</strain>
    </source>
</reference>
<reference key="5">
    <citation type="submission" date="2002-03" db="EMBL/GenBank/DDBJ databases">
        <title>Full-length cDNA from Arabidopsis thaliana.</title>
        <authorList>
            <person name="Brover V.V."/>
            <person name="Troukhan M.E."/>
            <person name="Alexandrov N.A."/>
            <person name="Lu Y.-P."/>
            <person name="Flavell R.B."/>
            <person name="Feldmann K.A."/>
        </authorList>
    </citation>
    <scope>NUCLEOTIDE SEQUENCE [LARGE SCALE MRNA]</scope>
</reference>
<reference key="6">
    <citation type="journal article" date="2003" name="New Phytol.">
        <title>Calmodulins and related potential calcium sensors of Arabidopsis.</title>
        <authorList>
            <person name="McCormack E."/>
            <person name="Braam J."/>
        </authorList>
    </citation>
    <scope>GENE FAMILY</scope>
    <scope>NOMENCLATURE</scope>
</reference>
<reference key="7">
    <citation type="journal article" date="2011" name="Mol. Cell">
        <title>Calmodulin-dependent activation of MAP kinase for ROS homeostasis in Arabidopsis.</title>
        <authorList>
            <person name="Takahashi F."/>
            <person name="Mizoguchi T."/>
            <person name="Yoshida R."/>
            <person name="Ichimura K."/>
            <person name="Shinozaki K."/>
        </authorList>
    </citation>
    <scope>INTERACTION WITH MPK8</scope>
    <scope>FUNCTION</scope>
</reference>
<reference key="8">
    <citation type="journal article" date="2016" name="New Phytol.">
        <title>ABC transporter PEN3/PDR8/ABCG36 interacts with calmodulin that, like PEN3, is required for Arabidopsis nonhost resistance.</title>
        <authorList>
            <person name="Campe R."/>
            <person name="Langenbach C."/>
            <person name="Leissing F."/>
            <person name="Popescu G.V."/>
            <person name="Popescu S.C."/>
            <person name="Goellner K."/>
            <person name="Beckers G.J."/>
            <person name="Conrath U."/>
        </authorList>
    </citation>
    <scope>INTERACTION WITH ABCG36</scope>
    <source>
        <strain>cv. Columbia</strain>
    </source>
</reference>
<gene>
    <name evidence="4" type="primary">CAM3</name>
    <name evidence="6" type="ordered locus">At3g56800</name>
    <name evidence="7" type="ORF">T8M16.130</name>
</gene>
<accession>P0DH98</accession>
<accession>P25069</accession>